<geneLocation type="chloroplast"/>
<comment type="function">
    <text evidence="2">Component of the cytochrome b6-f complex, which mediates electron transfer between photosystem II (PSII) and photosystem I (PSI), cyclic electron flow around PSI, and state transitions.</text>
</comment>
<comment type="cofactor">
    <cofactor evidence="2">
        <name>heme</name>
        <dbReference type="ChEBI" id="CHEBI:30413"/>
    </cofactor>
    <text evidence="2">Binds 1 heme group covalently.</text>
</comment>
<comment type="subunit">
    <text evidence="1">The 4 large subunits of the cytochrome b6-f complex are cytochrome b6, subunit IV (17 kDa polypeptide, petD), cytochrome f and the Rieske protein, while the 4 small subunits are PetG, PetL, PetM and PetN. The complex functions as a dimer (By similarity).</text>
</comment>
<comment type="subcellular location">
    <subcellularLocation>
        <location evidence="2">Plastid</location>
        <location evidence="2">Chloroplast thylakoid membrane</location>
        <topology evidence="2">Single-pass membrane protein</topology>
    </subcellularLocation>
</comment>
<comment type="similarity">
    <text evidence="2">Belongs to the cytochrome f family.</text>
</comment>
<reference key="1">
    <citation type="submission" date="2003-11" db="EMBL/GenBank/DDBJ databases">
        <title>Whole genome sequence of Porphyra yezoensis chloroplast.</title>
        <authorList>
            <person name="Kunimoto M."/>
            <person name="Morishima K."/>
            <person name="Yoshikawa M."/>
            <person name="Fukuda S."/>
            <person name="Kobayashi T."/>
            <person name="Kobayashi M."/>
            <person name="Okazaki T."/>
            <person name="Ohara I."/>
            <person name="Nakayama I."/>
        </authorList>
    </citation>
    <scope>NUCLEOTIDE SEQUENCE [LARGE SCALE GENOMIC DNA]</scope>
    <source>
        <strain>U-51</strain>
    </source>
</reference>
<organism>
    <name type="scientific">Pyropia yezoensis</name>
    <name type="common">Susabi-nori</name>
    <name type="synonym">Porphyra yezoensis</name>
    <dbReference type="NCBI Taxonomy" id="2788"/>
    <lineage>
        <taxon>Eukaryota</taxon>
        <taxon>Rhodophyta</taxon>
        <taxon>Bangiophyceae</taxon>
        <taxon>Bangiales</taxon>
        <taxon>Bangiaceae</taxon>
        <taxon>Pyropia</taxon>
    </lineage>
</organism>
<sequence length="320" mass="35075">MKLNSLINLIQKSIYSCTLLLIILNIICVAPNSSNAFPIYAQQAYESPREATGRIVCANCHLAQKPVEIEAPQAVLPNTVFETVVKIPYDSNAKQILGNGSKGGLNVGAVVILPEGFKLAPVNRLSTELKEKTRNLYIQPYSAKQDNILVIGPISGDKNREIVFPILSPDPAKDKKAHFFKYPIYVGGNRGRGQIYPTGDKSNNNIVSALSSGKINKIELLDKGGFIIHVTNSSNVESTQKISPGLELRVKEGDTIQLDQALNSDPNVGGFGQNETEIVLQSPNRIKGMIVFFFASVLAQIFFVLKKKQFEKVQAAEMNF</sequence>
<evidence type="ECO:0000250" key="1"/>
<evidence type="ECO:0000255" key="2">
    <source>
        <dbReference type="HAMAP-Rule" id="MF_00610"/>
    </source>
</evidence>
<accession>Q1XDM2</accession>
<name>CYF_PYRYE</name>
<proteinExistence type="inferred from homology"/>
<feature type="signal peptide" evidence="2">
    <location>
        <begin position="1"/>
        <end position="35"/>
    </location>
</feature>
<feature type="chain" id="PRO_0000275463" description="Cytochrome f">
    <location>
        <begin position="36"/>
        <end position="320"/>
    </location>
</feature>
<feature type="transmembrane region" description="Helical" evidence="2">
    <location>
        <begin position="286"/>
        <end position="306"/>
    </location>
</feature>
<feature type="binding site" description="axial binding residue" evidence="2">
    <location>
        <position position="37"/>
    </location>
    <ligand>
        <name>heme</name>
        <dbReference type="ChEBI" id="CHEBI:30413"/>
    </ligand>
    <ligandPart>
        <name>Fe</name>
        <dbReference type="ChEBI" id="CHEBI:18248"/>
    </ligandPart>
</feature>
<feature type="binding site" description="covalent" evidence="2">
    <location>
        <position position="57"/>
    </location>
    <ligand>
        <name>heme</name>
        <dbReference type="ChEBI" id="CHEBI:30413"/>
    </ligand>
</feature>
<feature type="binding site" description="covalent" evidence="2">
    <location>
        <position position="60"/>
    </location>
    <ligand>
        <name>heme</name>
        <dbReference type="ChEBI" id="CHEBI:30413"/>
    </ligand>
</feature>
<feature type="binding site" description="axial binding residue" evidence="2">
    <location>
        <position position="61"/>
    </location>
    <ligand>
        <name>heme</name>
        <dbReference type="ChEBI" id="CHEBI:30413"/>
    </ligand>
    <ligandPart>
        <name>Fe</name>
        <dbReference type="ChEBI" id="CHEBI:18248"/>
    </ligandPart>
</feature>
<dbReference type="EMBL" id="AP006715">
    <property type="protein sequence ID" value="BAE92389.1"/>
    <property type="molecule type" value="Genomic_DNA"/>
</dbReference>
<dbReference type="RefSeq" id="YP_536946.1">
    <property type="nucleotide sequence ID" value="NC_007932.1"/>
</dbReference>
<dbReference type="SMR" id="Q1XDM2"/>
<dbReference type="GeneID" id="3978896"/>
<dbReference type="GO" id="GO:0009535">
    <property type="term" value="C:chloroplast thylakoid membrane"/>
    <property type="evidence" value="ECO:0007669"/>
    <property type="project" value="UniProtKB-SubCell"/>
</dbReference>
<dbReference type="GO" id="GO:0009055">
    <property type="term" value="F:electron transfer activity"/>
    <property type="evidence" value="ECO:0007669"/>
    <property type="project" value="UniProtKB-UniRule"/>
</dbReference>
<dbReference type="GO" id="GO:0020037">
    <property type="term" value="F:heme binding"/>
    <property type="evidence" value="ECO:0007669"/>
    <property type="project" value="InterPro"/>
</dbReference>
<dbReference type="GO" id="GO:0005506">
    <property type="term" value="F:iron ion binding"/>
    <property type="evidence" value="ECO:0007669"/>
    <property type="project" value="InterPro"/>
</dbReference>
<dbReference type="GO" id="GO:0015979">
    <property type="term" value="P:photosynthesis"/>
    <property type="evidence" value="ECO:0007669"/>
    <property type="project" value="UniProtKB-UniRule"/>
</dbReference>
<dbReference type="FunFam" id="2.60.40.830:FF:000001">
    <property type="entry name" value="Cytochrome f"/>
    <property type="match status" value="1"/>
</dbReference>
<dbReference type="Gene3D" id="2.40.50.100">
    <property type="match status" value="1"/>
</dbReference>
<dbReference type="Gene3D" id="2.60.40.830">
    <property type="entry name" value="Cytochrome f large domain"/>
    <property type="match status" value="1"/>
</dbReference>
<dbReference type="Gene3D" id="1.20.5.700">
    <property type="entry name" value="Single helix bin"/>
    <property type="match status" value="1"/>
</dbReference>
<dbReference type="HAMAP" id="MF_00610">
    <property type="entry name" value="Cytb6_f_cytF"/>
    <property type="match status" value="1"/>
</dbReference>
<dbReference type="InterPro" id="IPR024058">
    <property type="entry name" value="Cyt-f_TM"/>
</dbReference>
<dbReference type="InterPro" id="IPR002325">
    <property type="entry name" value="Cyt_f"/>
</dbReference>
<dbReference type="InterPro" id="IPR024094">
    <property type="entry name" value="Cyt_f_lg_dom"/>
</dbReference>
<dbReference type="InterPro" id="IPR036826">
    <property type="entry name" value="Cyt_f_lg_dom_sf"/>
</dbReference>
<dbReference type="InterPro" id="IPR011054">
    <property type="entry name" value="Rudment_hybrid_motif"/>
</dbReference>
<dbReference type="PANTHER" id="PTHR33288">
    <property type="match status" value="1"/>
</dbReference>
<dbReference type="PANTHER" id="PTHR33288:SF10">
    <property type="entry name" value="CYTOCHROME F"/>
    <property type="match status" value="1"/>
</dbReference>
<dbReference type="Pfam" id="PF01333">
    <property type="entry name" value="Apocytochr_F_C"/>
    <property type="match status" value="1"/>
</dbReference>
<dbReference type="Pfam" id="PF16639">
    <property type="entry name" value="Apocytochr_F_N"/>
    <property type="match status" value="1"/>
</dbReference>
<dbReference type="PRINTS" id="PR00610">
    <property type="entry name" value="CYTOCHROMEF"/>
</dbReference>
<dbReference type="SUPFAM" id="SSF103431">
    <property type="entry name" value="Cytochrome f subunit of the cytochrome b6f complex, transmembrane anchor"/>
    <property type="match status" value="1"/>
</dbReference>
<dbReference type="SUPFAM" id="SSF49441">
    <property type="entry name" value="Cytochrome f, large domain"/>
    <property type="match status" value="1"/>
</dbReference>
<dbReference type="SUPFAM" id="SSF51246">
    <property type="entry name" value="Rudiment single hybrid motif"/>
    <property type="match status" value="1"/>
</dbReference>
<dbReference type="PROSITE" id="PS51010">
    <property type="entry name" value="CYTF"/>
    <property type="match status" value="1"/>
</dbReference>
<keyword id="KW-0150">Chloroplast</keyword>
<keyword id="KW-0249">Electron transport</keyword>
<keyword id="KW-0349">Heme</keyword>
<keyword id="KW-0408">Iron</keyword>
<keyword id="KW-0472">Membrane</keyword>
<keyword id="KW-0479">Metal-binding</keyword>
<keyword id="KW-0602">Photosynthesis</keyword>
<keyword id="KW-0934">Plastid</keyword>
<keyword id="KW-0732">Signal</keyword>
<keyword id="KW-0793">Thylakoid</keyword>
<keyword id="KW-0812">Transmembrane</keyword>
<keyword id="KW-1133">Transmembrane helix</keyword>
<keyword id="KW-0813">Transport</keyword>
<gene>
    <name evidence="2" type="primary">petA</name>
</gene>
<protein>
    <recommendedName>
        <fullName evidence="2">Cytochrome f</fullName>
    </recommendedName>
</protein>